<dbReference type="EC" id="7.1.1.-" evidence="1"/>
<dbReference type="EMBL" id="CP000076">
    <property type="protein sequence ID" value="AAY93163.1"/>
    <property type="molecule type" value="Genomic_DNA"/>
</dbReference>
<dbReference type="RefSeq" id="WP_011062187.1">
    <property type="nucleotide sequence ID" value="NC_004129.6"/>
</dbReference>
<dbReference type="SMR" id="Q4K9T4"/>
<dbReference type="STRING" id="220664.PFL_3899"/>
<dbReference type="KEGG" id="pfl:PFL_3899"/>
<dbReference type="PATRIC" id="fig|220664.5.peg.3996"/>
<dbReference type="eggNOG" id="COG0649">
    <property type="taxonomic scope" value="Bacteria"/>
</dbReference>
<dbReference type="eggNOG" id="COG0852">
    <property type="taxonomic scope" value="Bacteria"/>
</dbReference>
<dbReference type="HOGENOM" id="CLU_015134_3_2_6"/>
<dbReference type="Proteomes" id="UP000008540">
    <property type="component" value="Chromosome"/>
</dbReference>
<dbReference type="GO" id="GO:0030964">
    <property type="term" value="C:NADH dehydrogenase complex"/>
    <property type="evidence" value="ECO:0007669"/>
    <property type="project" value="InterPro"/>
</dbReference>
<dbReference type="GO" id="GO:0005886">
    <property type="term" value="C:plasma membrane"/>
    <property type="evidence" value="ECO:0007669"/>
    <property type="project" value="UniProtKB-SubCell"/>
</dbReference>
<dbReference type="GO" id="GO:0051287">
    <property type="term" value="F:NAD binding"/>
    <property type="evidence" value="ECO:0007669"/>
    <property type="project" value="InterPro"/>
</dbReference>
<dbReference type="GO" id="GO:0008137">
    <property type="term" value="F:NADH dehydrogenase (ubiquinone) activity"/>
    <property type="evidence" value="ECO:0007669"/>
    <property type="project" value="InterPro"/>
</dbReference>
<dbReference type="GO" id="GO:0050136">
    <property type="term" value="F:NADH:ubiquinone reductase (non-electrogenic) activity"/>
    <property type="evidence" value="ECO:0007669"/>
    <property type="project" value="UniProtKB-UniRule"/>
</dbReference>
<dbReference type="GO" id="GO:0048038">
    <property type="term" value="F:quinone binding"/>
    <property type="evidence" value="ECO:0007669"/>
    <property type="project" value="UniProtKB-KW"/>
</dbReference>
<dbReference type="FunFam" id="1.10.645.10:FF:000001">
    <property type="entry name" value="NADH-quinone oxidoreductase subunit C/D"/>
    <property type="match status" value="1"/>
</dbReference>
<dbReference type="FunFam" id="3.30.460.80:FF:000001">
    <property type="entry name" value="NADH-quinone oxidoreductase subunit C/D"/>
    <property type="match status" value="1"/>
</dbReference>
<dbReference type="Gene3D" id="1.10.645.10">
    <property type="entry name" value="Cytochrome-c3 Hydrogenase, chain B"/>
    <property type="match status" value="1"/>
</dbReference>
<dbReference type="Gene3D" id="3.30.460.80">
    <property type="entry name" value="NADH:ubiquinone oxidoreductase, 30kDa subunit"/>
    <property type="match status" value="1"/>
</dbReference>
<dbReference type="HAMAP" id="MF_01357">
    <property type="entry name" value="NDH1_NuoC"/>
    <property type="match status" value="1"/>
</dbReference>
<dbReference type="HAMAP" id="MF_01359">
    <property type="entry name" value="NDH1_NuoCD_1"/>
    <property type="match status" value="1"/>
</dbReference>
<dbReference type="HAMAP" id="MF_01358">
    <property type="entry name" value="NDH1_NuoD"/>
    <property type="match status" value="1"/>
</dbReference>
<dbReference type="InterPro" id="IPR010218">
    <property type="entry name" value="NADH_DH_suC"/>
</dbReference>
<dbReference type="InterPro" id="IPR023062">
    <property type="entry name" value="NADH_DH_suCD"/>
</dbReference>
<dbReference type="InterPro" id="IPR001135">
    <property type="entry name" value="NADH_Q_OxRdtase_suD"/>
</dbReference>
<dbReference type="InterPro" id="IPR037232">
    <property type="entry name" value="NADH_quin_OxRdtase_su_C/D-like"/>
</dbReference>
<dbReference type="InterPro" id="IPR001268">
    <property type="entry name" value="NADH_UbQ_OxRdtase_30kDa_su"/>
</dbReference>
<dbReference type="InterPro" id="IPR014029">
    <property type="entry name" value="NADH_UbQ_OxRdtase_49kDa_CS"/>
</dbReference>
<dbReference type="InterPro" id="IPR022885">
    <property type="entry name" value="NDH1_su_D/H"/>
</dbReference>
<dbReference type="InterPro" id="IPR029014">
    <property type="entry name" value="NiFe-Hase_large"/>
</dbReference>
<dbReference type="NCBIfam" id="TIGR01961">
    <property type="entry name" value="NuoC_fam"/>
    <property type="match status" value="1"/>
</dbReference>
<dbReference type="NCBIfam" id="TIGR01962">
    <property type="entry name" value="NuoD"/>
    <property type="match status" value="1"/>
</dbReference>
<dbReference type="NCBIfam" id="NF004739">
    <property type="entry name" value="PRK06075.1"/>
    <property type="match status" value="1"/>
</dbReference>
<dbReference type="NCBIfam" id="NF008728">
    <property type="entry name" value="PRK11742.1"/>
    <property type="match status" value="1"/>
</dbReference>
<dbReference type="PANTHER" id="PTHR11993:SF45">
    <property type="entry name" value="NADH-QUINONE OXIDOREDUCTASE SUBUNIT C_D"/>
    <property type="match status" value="1"/>
</dbReference>
<dbReference type="PANTHER" id="PTHR11993">
    <property type="entry name" value="NADH-UBIQUINONE OXIDOREDUCTASE 49 KDA SUBUNIT"/>
    <property type="match status" value="1"/>
</dbReference>
<dbReference type="Pfam" id="PF00329">
    <property type="entry name" value="Complex1_30kDa"/>
    <property type="match status" value="1"/>
</dbReference>
<dbReference type="Pfam" id="PF00346">
    <property type="entry name" value="Complex1_49kDa"/>
    <property type="match status" value="1"/>
</dbReference>
<dbReference type="SUPFAM" id="SSF56762">
    <property type="entry name" value="HydB/Nqo4-like"/>
    <property type="match status" value="1"/>
</dbReference>
<dbReference type="SUPFAM" id="SSF143243">
    <property type="entry name" value="Nqo5-like"/>
    <property type="match status" value="1"/>
</dbReference>
<dbReference type="PROSITE" id="PS00535">
    <property type="entry name" value="COMPLEX1_49K"/>
    <property type="match status" value="1"/>
</dbReference>
<comment type="function">
    <text evidence="1">NDH-1 shuttles electrons from NADH, via FMN and iron-sulfur (Fe-S) centers, to quinones in the respiratory chain. The immediate electron acceptor for the enzyme in this species is believed to be ubiquinone. Couples the redox reaction to proton translocation (for every two electrons transferred, four hydrogen ions are translocated across the cytoplasmic membrane), and thus conserves the redox energy in a proton gradient.</text>
</comment>
<comment type="catalytic activity">
    <reaction evidence="1">
        <text>a quinone + NADH + 5 H(+)(in) = a quinol + NAD(+) + 4 H(+)(out)</text>
        <dbReference type="Rhea" id="RHEA:57888"/>
        <dbReference type="ChEBI" id="CHEBI:15378"/>
        <dbReference type="ChEBI" id="CHEBI:24646"/>
        <dbReference type="ChEBI" id="CHEBI:57540"/>
        <dbReference type="ChEBI" id="CHEBI:57945"/>
        <dbReference type="ChEBI" id="CHEBI:132124"/>
    </reaction>
</comment>
<comment type="subunit">
    <text evidence="1">NDH-1 is composed of 13 different subunits. Subunits NuoB, CD, E, F, and G constitute the peripheral sector of the complex.</text>
</comment>
<comment type="subcellular location">
    <subcellularLocation>
        <location evidence="1">Cell inner membrane</location>
        <topology evidence="1">Peripheral membrane protein</topology>
        <orientation evidence="1">Cytoplasmic side</orientation>
    </subcellularLocation>
</comment>
<comment type="similarity">
    <text evidence="1">In the N-terminal section; belongs to the complex I 30 kDa subunit family.</text>
</comment>
<comment type="similarity">
    <text evidence="1">In the C-terminal section; belongs to the complex I 49 kDa subunit family.</text>
</comment>
<protein>
    <recommendedName>
        <fullName evidence="1">NADH-quinone oxidoreductase subunit C/D</fullName>
        <ecNumber evidence="1">7.1.1.-</ecNumber>
    </recommendedName>
    <alternativeName>
        <fullName evidence="1">NADH dehydrogenase I subunit C/D</fullName>
    </alternativeName>
    <alternativeName>
        <fullName evidence="1">NDH-1 subunit C/D</fullName>
    </alternativeName>
</protein>
<proteinExistence type="inferred from homology"/>
<evidence type="ECO:0000255" key="1">
    <source>
        <dbReference type="HAMAP-Rule" id="MF_01359"/>
    </source>
</evidence>
<accession>Q4K9T4</accession>
<sequence length="593" mass="67532">MTTGSALYIPPYKADDQDVVVELNNRFGPEAFTAQATRTGMPVLWVTRSKLVEVLTFLRNLPKPYVMLYDLHGVDERLRTKRQGLPGADFSVFYHLLSIERNSDVMIKVALSEGDLSLPTVTGIWPNANWYEREVWDMFGIDFAGHPHLSRIMMPPTWEGHPLRKDFPARATEFDPFSLNLAKQQLEEEAARFRPEDWGMKRSGANEDYMFLNLGPNHPSAHGAFRIILQLDGEEIVDCVPDIGYHHRGAEKMAERQSWHSFIPYTDRIDYLGGVMNNLPYVLSVEKLAGIKVPEKVDVIRIMMAEFFRITSHLLFLGTYIQDVGAMTPVFFTFTDRQRAYTVIEAITGFRLHPAWYRIGGVAHDLPRGWEKLVKDFVEWLPKRLDEYTKAALQNSILKGRTIGVAAYNTKEALEWGVTGAGLRSTGCDFDLRKARPYSGYENFEFEVPLAANGDAYDRCMVRVEEMRQSIKIIDQCLRNMPEGPYKADHPLTTPPPKERTLQHIETLITHFLQVSWGPVMPANESFQMIEATKGINSYYLTSDGGTMSYRTRIRTPSFAHLQQIPSVIRGSMVADLIAYLGSIDFVMADVDR</sequence>
<keyword id="KW-0997">Cell inner membrane</keyword>
<keyword id="KW-1003">Cell membrane</keyword>
<keyword id="KW-0472">Membrane</keyword>
<keyword id="KW-0511">Multifunctional enzyme</keyword>
<keyword id="KW-0520">NAD</keyword>
<keyword id="KW-0874">Quinone</keyword>
<keyword id="KW-1278">Translocase</keyword>
<keyword id="KW-0813">Transport</keyword>
<keyword id="KW-0830">Ubiquinone</keyword>
<reference key="1">
    <citation type="journal article" date="2005" name="Nat. Biotechnol.">
        <title>Complete genome sequence of the plant commensal Pseudomonas fluorescens Pf-5.</title>
        <authorList>
            <person name="Paulsen I.T."/>
            <person name="Press C.M."/>
            <person name="Ravel J."/>
            <person name="Kobayashi D.Y."/>
            <person name="Myers G.S.A."/>
            <person name="Mavrodi D.V."/>
            <person name="DeBoy R.T."/>
            <person name="Seshadri R."/>
            <person name="Ren Q."/>
            <person name="Madupu R."/>
            <person name="Dodson R.J."/>
            <person name="Durkin A.S."/>
            <person name="Brinkac L.M."/>
            <person name="Daugherty S.C."/>
            <person name="Sullivan S.A."/>
            <person name="Rosovitz M.J."/>
            <person name="Gwinn M.L."/>
            <person name="Zhou L."/>
            <person name="Schneider D.J."/>
            <person name="Cartinhour S.W."/>
            <person name="Nelson W.C."/>
            <person name="Weidman J."/>
            <person name="Watkins K."/>
            <person name="Tran K."/>
            <person name="Khouri H."/>
            <person name="Pierson E.A."/>
            <person name="Pierson L.S. III"/>
            <person name="Thomashow L.S."/>
            <person name="Loper J.E."/>
        </authorList>
    </citation>
    <scope>NUCLEOTIDE SEQUENCE [LARGE SCALE GENOMIC DNA]</scope>
    <source>
        <strain>ATCC BAA-477 / NRRL B-23932 / Pf-5</strain>
    </source>
</reference>
<feature type="chain" id="PRO_0000358658" description="NADH-quinone oxidoreductase subunit C/D">
    <location>
        <begin position="1"/>
        <end position="593"/>
    </location>
</feature>
<feature type="region of interest" description="NADH dehydrogenase I subunit C" evidence="1">
    <location>
        <begin position="1"/>
        <end position="184"/>
    </location>
</feature>
<feature type="region of interest" description="NADH dehydrogenase I subunit D" evidence="1">
    <location>
        <begin position="208"/>
        <end position="593"/>
    </location>
</feature>
<organism>
    <name type="scientific">Pseudomonas fluorescens (strain ATCC BAA-477 / NRRL B-23932 / Pf-5)</name>
    <dbReference type="NCBI Taxonomy" id="220664"/>
    <lineage>
        <taxon>Bacteria</taxon>
        <taxon>Pseudomonadati</taxon>
        <taxon>Pseudomonadota</taxon>
        <taxon>Gammaproteobacteria</taxon>
        <taxon>Pseudomonadales</taxon>
        <taxon>Pseudomonadaceae</taxon>
        <taxon>Pseudomonas</taxon>
    </lineage>
</organism>
<gene>
    <name evidence="1" type="primary">nuoC</name>
    <name evidence="1" type="synonym">nuoCD</name>
    <name evidence="1" type="synonym">nuoD</name>
    <name type="ordered locus">PFL_3899</name>
</gene>
<name>NUOCD_PSEF5</name>